<name>Y2443_LEGPL</name>
<dbReference type="EMBL" id="CR628337">
    <property type="protein sequence ID" value="CAH16683.1"/>
    <property type="molecule type" value="Genomic_DNA"/>
</dbReference>
<dbReference type="RefSeq" id="WP_011216402.1">
    <property type="nucleotide sequence ID" value="NC_006369.1"/>
</dbReference>
<dbReference type="KEGG" id="lpf:lpl2443"/>
<dbReference type="LegioList" id="lpl2443"/>
<dbReference type="HOGENOM" id="CLU_187346_1_0_6"/>
<dbReference type="Proteomes" id="UP000002517">
    <property type="component" value="Chromosome"/>
</dbReference>
<dbReference type="GO" id="GO:0005886">
    <property type="term" value="C:plasma membrane"/>
    <property type="evidence" value="ECO:0007669"/>
    <property type="project" value="UniProtKB-SubCell"/>
</dbReference>
<dbReference type="HAMAP" id="MF_01361">
    <property type="entry name" value="UPF0391"/>
    <property type="match status" value="1"/>
</dbReference>
<dbReference type="InterPro" id="IPR009760">
    <property type="entry name" value="DUF1328"/>
</dbReference>
<dbReference type="NCBIfam" id="NF010226">
    <property type="entry name" value="PRK13682.1-1"/>
    <property type="match status" value="1"/>
</dbReference>
<dbReference type="NCBIfam" id="NF010229">
    <property type="entry name" value="PRK13682.1-4"/>
    <property type="match status" value="1"/>
</dbReference>
<dbReference type="NCBIfam" id="NF010233">
    <property type="entry name" value="PRK13682.2-4"/>
    <property type="match status" value="1"/>
</dbReference>
<dbReference type="Pfam" id="PF07043">
    <property type="entry name" value="DUF1328"/>
    <property type="match status" value="1"/>
</dbReference>
<dbReference type="PIRSF" id="PIRSF036466">
    <property type="entry name" value="UCP036466"/>
    <property type="match status" value="1"/>
</dbReference>
<reference key="1">
    <citation type="journal article" date="2004" name="Nat. Genet.">
        <title>Evidence in the Legionella pneumophila genome for exploitation of host cell functions and high genome plasticity.</title>
        <authorList>
            <person name="Cazalet C."/>
            <person name="Rusniok C."/>
            <person name="Brueggemann H."/>
            <person name="Zidane N."/>
            <person name="Magnier A."/>
            <person name="Ma L."/>
            <person name="Tichit M."/>
            <person name="Jarraud S."/>
            <person name="Bouchier C."/>
            <person name="Vandenesch F."/>
            <person name="Kunst F."/>
            <person name="Etienne J."/>
            <person name="Glaser P."/>
            <person name="Buchrieser C."/>
        </authorList>
    </citation>
    <scope>NUCLEOTIDE SEQUENCE [LARGE SCALE GENOMIC DNA]</scope>
    <source>
        <strain>Lens</strain>
    </source>
</reference>
<protein>
    <recommendedName>
        <fullName evidence="1">UPF0391 membrane protein lpl2443</fullName>
    </recommendedName>
</protein>
<proteinExistence type="inferred from homology"/>
<gene>
    <name type="ordered locus">lpl2443</name>
</gene>
<accession>Q5WTT0</accession>
<comment type="subcellular location">
    <subcellularLocation>
        <location evidence="1">Cell membrane</location>
        <topology evidence="1">Multi-pass membrane protein</topology>
    </subcellularLocation>
</comment>
<comment type="similarity">
    <text evidence="1">Belongs to the UPF0391 family.</text>
</comment>
<keyword id="KW-1003">Cell membrane</keyword>
<keyword id="KW-0472">Membrane</keyword>
<keyword id="KW-0812">Transmembrane</keyword>
<keyword id="KW-1133">Transmembrane helix</keyword>
<evidence type="ECO:0000255" key="1">
    <source>
        <dbReference type="HAMAP-Rule" id="MF_01361"/>
    </source>
</evidence>
<organism>
    <name type="scientific">Legionella pneumophila (strain Lens)</name>
    <dbReference type="NCBI Taxonomy" id="297245"/>
    <lineage>
        <taxon>Bacteria</taxon>
        <taxon>Pseudomonadati</taxon>
        <taxon>Pseudomonadota</taxon>
        <taxon>Gammaproteobacteria</taxon>
        <taxon>Legionellales</taxon>
        <taxon>Legionellaceae</taxon>
        <taxon>Legionella</taxon>
    </lineage>
</organism>
<feature type="chain" id="PRO_0000256743" description="UPF0391 membrane protein lpl2443">
    <location>
        <begin position="1"/>
        <end position="59"/>
    </location>
</feature>
<feature type="transmembrane region" description="Helical" evidence="1">
    <location>
        <begin position="5"/>
        <end position="25"/>
    </location>
</feature>
<feature type="transmembrane region" description="Helical" evidence="1">
    <location>
        <begin position="30"/>
        <end position="50"/>
    </location>
</feature>
<sequence length="59" mass="6285">MLSWALIFFIIAIIAAAFGFGGIAVAAAGIAKILFFLFLVMFVIFLIMGLIGRRGPPPV</sequence>